<accession>Q32B50</accession>
<comment type="function">
    <text evidence="1">Binds to the 23S rRNA.</text>
</comment>
<comment type="subunit">
    <text evidence="1">Part of the 50S ribosomal subunit.</text>
</comment>
<comment type="similarity">
    <text evidence="1">Belongs to the universal ribosomal protein uL15 family.</text>
</comment>
<dbReference type="EMBL" id="CP000034">
    <property type="protein sequence ID" value="ABB63455.1"/>
    <property type="molecule type" value="Genomic_DNA"/>
</dbReference>
<dbReference type="RefSeq" id="WP_001238917.1">
    <property type="nucleotide sequence ID" value="NC_007606.1"/>
</dbReference>
<dbReference type="RefSeq" id="YP_404946.1">
    <property type="nucleotide sequence ID" value="NC_007606.1"/>
</dbReference>
<dbReference type="SMR" id="Q32B50"/>
<dbReference type="STRING" id="300267.SDY_3477"/>
<dbReference type="EnsemblBacteria" id="ABB63455">
    <property type="protein sequence ID" value="ABB63455"/>
    <property type="gene ID" value="SDY_3477"/>
</dbReference>
<dbReference type="GeneID" id="93778686"/>
<dbReference type="KEGG" id="sdy:SDY_3477"/>
<dbReference type="PATRIC" id="fig|300267.13.peg.4130"/>
<dbReference type="HOGENOM" id="CLU_055188_4_2_6"/>
<dbReference type="Proteomes" id="UP000002716">
    <property type="component" value="Chromosome"/>
</dbReference>
<dbReference type="GO" id="GO:0022625">
    <property type="term" value="C:cytosolic large ribosomal subunit"/>
    <property type="evidence" value="ECO:0007669"/>
    <property type="project" value="TreeGrafter"/>
</dbReference>
<dbReference type="GO" id="GO:0019843">
    <property type="term" value="F:rRNA binding"/>
    <property type="evidence" value="ECO:0007669"/>
    <property type="project" value="UniProtKB-UniRule"/>
</dbReference>
<dbReference type="GO" id="GO:0003735">
    <property type="term" value="F:structural constituent of ribosome"/>
    <property type="evidence" value="ECO:0007669"/>
    <property type="project" value="InterPro"/>
</dbReference>
<dbReference type="GO" id="GO:0006412">
    <property type="term" value="P:translation"/>
    <property type="evidence" value="ECO:0007669"/>
    <property type="project" value="UniProtKB-UniRule"/>
</dbReference>
<dbReference type="FunFam" id="3.100.10.10:FF:000003">
    <property type="entry name" value="50S ribosomal protein L15"/>
    <property type="match status" value="1"/>
</dbReference>
<dbReference type="Gene3D" id="3.100.10.10">
    <property type="match status" value="1"/>
</dbReference>
<dbReference type="HAMAP" id="MF_01341">
    <property type="entry name" value="Ribosomal_uL15"/>
    <property type="match status" value="1"/>
</dbReference>
<dbReference type="InterPro" id="IPR030878">
    <property type="entry name" value="Ribosomal_uL15"/>
</dbReference>
<dbReference type="InterPro" id="IPR021131">
    <property type="entry name" value="Ribosomal_uL15/eL18"/>
</dbReference>
<dbReference type="InterPro" id="IPR036227">
    <property type="entry name" value="Ribosomal_uL15/eL18_sf"/>
</dbReference>
<dbReference type="InterPro" id="IPR005749">
    <property type="entry name" value="Ribosomal_uL15_bac-type"/>
</dbReference>
<dbReference type="InterPro" id="IPR001196">
    <property type="entry name" value="Ribosomal_uL15_CS"/>
</dbReference>
<dbReference type="NCBIfam" id="TIGR01071">
    <property type="entry name" value="rplO_bact"/>
    <property type="match status" value="1"/>
</dbReference>
<dbReference type="PANTHER" id="PTHR12934">
    <property type="entry name" value="50S RIBOSOMAL PROTEIN L15"/>
    <property type="match status" value="1"/>
</dbReference>
<dbReference type="PANTHER" id="PTHR12934:SF11">
    <property type="entry name" value="LARGE RIBOSOMAL SUBUNIT PROTEIN UL15M"/>
    <property type="match status" value="1"/>
</dbReference>
<dbReference type="Pfam" id="PF00828">
    <property type="entry name" value="Ribosomal_L27A"/>
    <property type="match status" value="1"/>
</dbReference>
<dbReference type="SUPFAM" id="SSF52080">
    <property type="entry name" value="Ribosomal proteins L15p and L18e"/>
    <property type="match status" value="1"/>
</dbReference>
<dbReference type="PROSITE" id="PS00475">
    <property type="entry name" value="RIBOSOMAL_L15"/>
    <property type="match status" value="1"/>
</dbReference>
<name>RL15_SHIDS</name>
<keyword id="KW-1185">Reference proteome</keyword>
<keyword id="KW-0687">Ribonucleoprotein</keyword>
<keyword id="KW-0689">Ribosomal protein</keyword>
<keyword id="KW-0694">RNA-binding</keyword>
<keyword id="KW-0699">rRNA-binding</keyword>
<organism>
    <name type="scientific">Shigella dysenteriae serotype 1 (strain Sd197)</name>
    <dbReference type="NCBI Taxonomy" id="300267"/>
    <lineage>
        <taxon>Bacteria</taxon>
        <taxon>Pseudomonadati</taxon>
        <taxon>Pseudomonadota</taxon>
        <taxon>Gammaproteobacteria</taxon>
        <taxon>Enterobacterales</taxon>
        <taxon>Enterobacteriaceae</taxon>
        <taxon>Shigella</taxon>
    </lineage>
</organism>
<gene>
    <name evidence="1" type="primary">rplO</name>
    <name type="ordered locus">SDY_3477</name>
</gene>
<reference key="1">
    <citation type="journal article" date="2005" name="Nucleic Acids Res.">
        <title>Genome dynamics and diversity of Shigella species, the etiologic agents of bacillary dysentery.</title>
        <authorList>
            <person name="Yang F."/>
            <person name="Yang J."/>
            <person name="Zhang X."/>
            <person name="Chen L."/>
            <person name="Jiang Y."/>
            <person name="Yan Y."/>
            <person name="Tang X."/>
            <person name="Wang J."/>
            <person name="Xiong Z."/>
            <person name="Dong J."/>
            <person name="Xue Y."/>
            <person name="Zhu Y."/>
            <person name="Xu X."/>
            <person name="Sun L."/>
            <person name="Chen S."/>
            <person name="Nie H."/>
            <person name="Peng J."/>
            <person name="Xu J."/>
            <person name="Wang Y."/>
            <person name="Yuan Z."/>
            <person name="Wen Y."/>
            <person name="Yao Z."/>
            <person name="Shen Y."/>
            <person name="Qiang B."/>
            <person name="Hou Y."/>
            <person name="Yu J."/>
            <person name="Jin Q."/>
        </authorList>
    </citation>
    <scope>NUCLEOTIDE SEQUENCE [LARGE SCALE GENOMIC DNA]</scope>
    <source>
        <strain>Sd197</strain>
    </source>
</reference>
<feature type="chain" id="PRO_0000251561" description="Large ribosomal subunit protein uL15">
    <location>
        <begin position="1"/>
        <end position="144"/>
    </location>
</feature>
<feature type="region of interest" description="Disordered" evidence="2">
    <location>
        <begin position="1"/>
        <end position="54"/>
    </location>
</feature>
<feature type="compositionally biased region" description="Gly residues" evidence="2">
    <location>
        <begin position="21"/>
        <end position="31"/>
    </location>
</feature>
<proteinExistence type="inferred from homology"/>
<sequence length="144" mass="14966">MRLNTLSPAEGSKKAGKRLGRGIGSGLGKTGGRGHKGQKSRSGGGVRRGFEGGQMPLYRRLPKFGFTSRKAAITAEVRLSDLAKVEGGVVDLNTLKAANIIGIQIEFAKVILAGEVTTPVTVRGLRVTKGARAAIEAAGGKIEE</sequence>
<protein>
    <recommendedName>
        <fullName evidence="1">Large ribosomal subunit protein uL15</fullName>
    </recommendedName>
    <alternativeName>
        <fullName evidence="3">50S ribosomal protein L15</fullName>
    </alternativeName>
</protein>
<evidence type="ECO:0000255" key="1">
    <source>
        <dbReference type="HAMAP-Rule" id="MF_01341"/>
    </source>
</evidence>
<evidence type="ECO:0000256" key="2">
    <source>
        <dbReference type="SAM" id="MobiDB-lite"/>
    </source>
</evidence>
<evidence type="ECO:0000305" key="3"/>